<gene>
    <name evidence="1" type="primary">def</name>
    <name type="ordered locus">SynRCC307_0355</name>
</gene>
<evidence type="ECO:0000255" key="1">
    <source>
        <dbReference type="HAMAP-Rule" id="MF_00163"/>
    </source>
</evidence>
<evidence type="ECO:0000256" key="2">
    <source>
        <dbReference type="SAM" id="MobiDB-lite"/>
    </source>
</evidence>
<feature type="chain" id="PRO_1000023136" description="Peptide deformylase">
    <location>
        <begin position="1"/>
        <end position="201"/>
    </location>
</feature>
<feature type="region of interest" description="Disordered" evidence="2">
    <location>
        <begin position="1"/>
        <end position="34"/>
    </location>
</feature>
<feature type="compositionally biased region" description="Basic and acidic residues" evidence="2">
    <location>
        <begin position="23"/>
        <end position="32"/>
    </location>
</feature>
<feature type="active site" evidence="1">
    <location>
        <position position="164"/>
    </location>
</feature>
<feature type="binding site" evidence="1">
    <location>
        <position position="121"/>
    </location>
    <ligand>
        <name>Fe cation</name>
        <dbReference type="ChEBI" id="CHEBI:24875"/>
    </ligand>
</feature>
<feature type="binding site" evidence="1">
    <location>
        <position position="163"/>
    </location>
    <ligand>
        <name>Fe cation</name>
        <dbReference type="ChEBI" id="CHEBI:24875"/>
    </ligand>
</feature>
<feature type="binding site" evidence="1">
    <location>
        <position position="167"/>
    </location>
    <ligand>
        <name>Fe cation</name>
        <dbReference type="ChEBI" id="CHEBI:24875"/>
    </ligand>
</feature>
<name>DEF_SYNR3</name>
<dbReference type="EC" id="3.5.1.88" evidence="1"/>
<dbReference type="EMBL" id="CT978603">
    <property type="protein sequence ID" value="CAK27258.1"/>
    <property type="molecule type" value="Genomic_DNA"/>
</dbReference>
<dbReference type="SMR" id="A5GQU9"/>
<dbReference type="STRING" id="316278.SynRCC307_0355"/>
<dbReference type="KEGG" id="syr:SynRCC307_0355"/>
<dbReference type="eggNOG" id="COG0242">
    <property type="taxonomic scope" value="Bacteria"/>
</dbReference>
<dbReference type="HOGENOM" id="CLU_061901_4_2_3"/>
<dbReference type="OrthoDB" id="9784988at2"/>
<dbReference type="Proteomes" id="UP000001115">
    <property type="component" value="Chromosome"/>
</dbReference>
<dbReference type="GO" id="GO:0046872">
    <property type="term" value="F:metal ion binding"/>
    <property type="evidence" value="ECO:0007669"/>
    <property type="project" value="UniProtKB-KW"/>
</dbReference>
<dbReference type="GO" id="GO:0042586">
    <property type="term" value="F:peptide deformylase activity"/>
    <property type="evidence" value="ECO:0007669"/>
    <property type="project" value="UniProtKB-UniRule"/>
</dbReference>
<dbReference type="GO" id="GO:0043686">
    <property type="term" value="P:co-translational protein modification"/>
    <property type="evidence" value="ECO:0007669"/>
    <property type="project" value="TreeGrafter"/>
</dbReference>
<dbReference type="GO" id="GO:0006412">
    <property type="term" value="P:translation"/>
    <property type="evidence" value="ECO:0007669"/>
    <property type="project" value="UniProtKB-UniRule"/>
</dbReference>
<dbReference type="CDD" id="cd00487">
    <property type="entry name" value="Pep_deformylase"/>
    <property type="match status" value="1"/>
</dbReference>
<dbReference type="FunFam" id="3.90.45.10:FF:000005">
    <property type="entry name" value="Peptide deformylase"/>
    <property type="match status" value="1"/>
</dbReference>
<dbReference type="Gene3D" id="3.90.45.10">
    <property type="entry name" value="Peptide deformylase"/>
    <property type="match status" value="1"/>
</dbReference>
<dbReference type="HAMAP" id="MF_00163">
    <property type="entry name" value="Pep_deformylase"/>
    <property type="match status" value="1"/>
</dbReference>
<dbReference type="InterPro" id="IPR023635">
    <property type="entry name" value="Peptide_deformylase"/>
</dbReference>
<dbReference type="InterPro" id="IPR036821">
    <property type="entry name" value="Peptide_deformylase_sf"/>
</dbReference>
<dbReference type="NCBIfam" id="TIGR00079">
    <property type="entry name" value="pept_deformyl"/>
    <property type="match status" value="1"/>
</dbReference>
<dbReference type="NCBIfam" id="NF001159">
    <property type="entry name" value="PRK00150.1-3"/>
    <property type="match status" value="1"/>
</dbReference>
<dbReference type="PANTHER" id="PTHR10458">
    <property type="entry name" value="PEPTIDE DEFORMYLASE"/>
    <property type="match status" value="1"/>
</dbReference>
<dbReference type="PANTHER" id="PTHR10458:SF22">
    <property type="entry name" value="PEPTIDE DEFORMYLASE"/>
    <property type="match status" value="1"/>
</dbReference>
<dbReference type="Pfam" id="PF01327">
    <property type="entry name" value="Pep_deformylase"/>
    <property type="match status" value="1"/>
</dbReference>
<dbReference type="PIRSF" id="PIRSF004749">
    <property type="entry name" value="Pep_def"/>
    <property type="match status" value="1"/>
</dbReference>
<dbReference type="PRINTS" id="PR01576">
    <property type="entry name" value="PDEFORMYLASE"/>
</dbReference>
<dbReference type="SUPFAM" id="SSF56420">
    <property type="entry name" value="Peptide deformylase"/>
    <property type="match status" value="1"/>
</dbReference>
<accession>A5GQU9</accession>
<comment type="function">
    <text evidence="1">Removes the formyl group from the N-terminal Met of newly synthesized proteins. Requires at least a dipeptide for an efficient rate of reaction. N-terminal L-methionine is a prerequisite for activity but the enzyme has broad specificity at other positions.</text>
</comment>
<comment type="catalytic activity">
    <reaction evidence="1">
        <text>N-terminal N-formyl-L-methionyl-[peptide] + H2O = N-terminal L-methionyl-[peptide] + formate</text>
        <dbReference type="Rhea" id="RHEA:24420"/>
        <dbReference type="Rhea" id="RHEA-COMP:10639"/>
        <dbReference type="Rhea" id="RHEA-COMP:10640"/>
        <dbReference type="ChEBI" id="CHEBI:15377"/>
        <dbReference type="ChEBI" id="CHEBI:15740"/>
        <dbReference type="ChEBI" id="CHEBI:49298"/>
        <dbReference type="ChEBI" id="CHEBI:64731"/>
        <dbReference type="EC" id="3.5.1.88"/>
    </reaction>
</comment>
<comment type="cofactor">
    <cofactor evidence="1">
        <name>Fe(2+)</name>
        <dbReference type="ChEBI" id="CHEBI:29033"/>
    </cofactor>
    <text evidence="1">Binds 1 Fe(2+) ion.</text>
</comment>
<comment type="similarity">
    <text evidence="1">Belongs to the polypeptide deformylase family.</text>
</comment>
<organism>
    <name type="scientific">Synechococcus sp. (strain RCC307)</name>
    <dbReference type="NCBI Taxonomy" id="316278"/>
    <lineage>
        <taxon>Bacteria</taxon>
        <taxon>Bacillati</taxon>
        <taxon>Cyanobacteriota</taxon>
        <taxon>Cyanophyceae</taxon>
        <taxon>Synechococcales</taxon>
        <taxon>Synechococcaceae</taxon>
        <taxon>Synechococcus</taxon>
    </lineage>
</organism>
<sequence length="201" mass="22242">MSLNFAAMARQSERQASTVMVPKGEEQPESPKIHTLGSNELRKPAKRISKVNEQVRELAREMLRSMYAAHGIGLAAPQVGVHQQLLVIDLDPEEAANPPLVLINPEIVATSGALDTYEEGCLSIPGVYLNVVRPSQVDVKYRDELGRPQRRKADGLMARCILHEMDHLNGVLFVDRVSDELSLSGELQRLGFDRNDVKPVA</sequence>
<reference key="1">
    <citation type="submission" date="2006-05" db="EMBL/GenBank/DDBJ databases">
        <authorList>
            <consortium name="Genoscope"/>
        </authorList>
    </citation>
    <scope>NUCLEOTIDE SEQUENCE [LARGE SCALE GENOMIC DNA]</scope>
    <source>
        <strain>RCC307</strain>
    </source>
</reference>
<protein>
    <recommendedName>
        <fullName evidence="1">Peptide deformylase</fullName>
        <shortName evidence="1">PDF</shortName>
        <ecNumber evidence="1">3.5.1.88</ecNumber>
    </recommendedName>
    <alternativeName>
        <fullName evidence="1">Polypeptide deformylase</fullName>
    </alternativeName>
</protein>
<keyword id="KW-0378">Hydrolase</keyword>
<keyword id="KW-0408">Iron</keyword>
<keyword id="KW-0479">Metal-binding</keyword>
<keyword id="KW-0648">Protein biosynthesis</keyword>
<keyword id="KW-1185">Reference proteome</keyword>
<proteinExistence type="inferred from homology"/>